<keyword id="KW-0333">Golgi apparatus</keyword>
<keyword id="KW-0472">Membrane</keyword>
<keyword id="KW-1185">Reference proteome</keyword>
<keyword id="KW-0812">Transmembrane</keyword>
<keyword id="KW-1133">Transmembrane helix</keyword>
<proteinExistence type="inferred from homology"/>
<evidence type="ECO:0000250" key="1">
    <source>
        <dbReference type="UniProtKB" id="Q8N6I4"/>
    </source>
</evidence>
<evidence type="ECO:0000255" key="2"/>
<evidence type="ECO:0000269" key="3">
    <source>
    </source>
</evidence>
<evidence type="ECO:0000305" key="4"/>
<evidence type="ECO:0000312" key="5">
    <source>
        <dbReference type="Proteomes" id="UP000002494"/>
    </source>
</evidence>
<evidence type="ECO:0000312" key="6">
    <source>
        <dbReference type="RGD" id="1566396"/>
    </source>
</evidence>
<protein>
    <recommendedName>
        <fullName>Lysosomal enzyme trafficking factor</fullName>
    </recommendedName>
    <alternativeName>
        <fullName>Transmembrane protein 251</fullName>
    </alternativeName>
</protein>
<organism evidence="5">
    <name type="scientific">Rattus norvegicus</name>
    <name type="common">Rat</name>
    <dbReference type="NCBI Taxonomy" id="10116"/>
    <lineage>
        <taxon>Eukaryota</taxon>
        <taxon>Metazoa</taxon>
        <taxon>Chordata</taxon>
        <taxon>Craniata</taxon>
        <taxon>Vertebrata</taxon>
        <taxon>Euteleostomi</taxon>
        <taxon>Mammalia</taxon>
        <taxon>Eutheria</taxon>
        <taxon>Euarchontoglires</taxon>
        <taxon>Glires</taxon>
        <taxon>Rodentia</taxon>
        <taxon>Myomorpha</taxon>
        <taxon>Muroidea</taxon>
        <taxon>Muridae</taxon>
        <taxon>Murinae</taxon>
        <taxon>Rattus</taxon>
    </lineage>
</organism>
<accession>F1LXS7</accession>
<comment type="function">
    <text evidence="1">Required for mannose-6-phosphate-dependent trafficking of lysosomal enzymes. LYSET bridges GlcNAc-1-phosphate transferase (GNPTAB), to the membrane-bound transcription factor site-1 protease (MBTPS1), thus allowing proteolytic activation of the GNPTAB. GNPTAB is involved in the regulation of M6P-dependent Golgi-to-lysosome trafficking of lysosomal enzymes. LYSET is thus an essential factor for maturation and delivery of lysosomal hydrolases.</text>
</comment>
<comment type="subunit">
    <text evidence="1">Interacts with GNPTAB; this interaction is important for proper localization of GNPTAB in Golgi stacks. Interacts with MBTPS1.</text>
</comment>
<comment type="subcellular location">
    <subcellularLocation>
        <location evidence="3">Golgi apparatus membrane</location>
        <topology evidence="2">Multi-pass membrane protein</topology>
    </subcellularLocation>
    <text evidence="1">Colocalizes with GNPTAB and GNPTG in Golgi apparatus cisternae.</text>
</comment>
<comment type="similarity">
    <text evidence="4">Belongs to the LYSET family.</text>
</comment>
<sequence length="163" mass="18823">MPKAPDYSELSDSCTLAGGTARFSGPLHRAWRMMNFRQRMGWIGVGLYLLASAAAFYYVFEINETYNRLALEHIQQHPEEPREGTTWTHSLKARLLSLPFWLWTVIFLIPYLQMFLFLYSCTRADPKTVGYCIIPICLAIICNRHQAFVKASNQISRLQLIDT</sequence>
<name>LYSET_RAT</name>
<feature type="chain" id="PRO_0000457157" description="Lysosomal enzyme trafficking factor">
    <location>
        <begin position="1"/>
        <end position="163"/>
    </location>
</feature>
<feature type="transmembrane region" description="Helical" evidence="2">
    <location>
        <begin position="40"/>
        <end position="60"/>
    </location>
</feature>
<feature type="transmembrane region" description="Helical" evidence="2">
    <location>
        <begin position="100"/>
        <end position="119"/>
    </location>
</feature>
<dbReference type="EMBL" id="AC109025">
    <property type="status" value="NOT_ANNOTATED_CDS"/>
    <property type="molecule type" value="Genomic_DNA"/>
</dbReference>
<dbReference type="EMBL" id="CH473982">
    <property type="protein sequence ID" value="EDL81759.1"/>
    <property type="molecule type" value="Genomic_DNA"/>
</dbReference>
<dbReference type="RefSeq" id="NP_001385481.1">
    <property type="nucleotide sequence ID" value="NM_001398552.1"/>
</dbReference>
<dbReference type="RefSeq" id="XP_002729793.2">
    <property type="nucleotide sequence ID" value="XM_002729747.5"/>
</dbReference>
<dbReference type="RefSeq" id="XP_003754281.1">
    <property type="nucleotide sequence ID" value="XM_003754233.4"/>
</dbReference>
<dbReference type="FunCoup" id="F1LXS7">
    <property type="interactions" value="540"/>
</dbReference>
<dbReference type="STRING" id="10116.ENSRNOP00000010672"/>
<dbReference type="PaxDb" id="10116-ENSRNOP00000010672"/>
<dbReference type="Ensembl" id="ENSRNOT00000010672.7">
    <property type="protein sequence ID" value="ENSRNOP00000010672.5"/>
    <property type="gene ID" value="ENSRNOG00000008101.7"/>
</dbReference>
<dbReference type="GeneID" id="100360358"/>
<dbReference type="AGR" id="RGD:1566396"/>
<dbReference type="RGD" id="1566396">
    <property type="gene designation" value="Lyset"/>
</dbReference>
<dbReference type="eggNOG" id="ENOG502RY2J">
    <property type="taxonomic scope" value="Eukaryota"/>
</dbReference>
<dbReference type="GeneTree" id="ENSGT00390000007473"/>
<dbReference type="HOGENOM" id="CLU_133007_0_0_1"/>
<dbReference type="InParanoid" id="F1LXS7"/>
<dbReference type="OMA" id="AYYIFEV"/>
<dbReference type="OrthoDB" id="6273523at2759"/>
<dbReference type="TreeFam" id="TF332722"/>
<dbReference type="PRO" id="PR:F1LXS7"/>
<dbReference type="Proteomes" id="UP000002494">
    <property type="component" value="Chromosome 6"/>
</dbReference>
<dbReference type="Proteomes" id="UP000234681">
    <property type="component" value="Chromosome 6"/>
</dbReference>
<dbReference type="Bgee" id="ENSRNOG00000008101">
    <property type="expression patterns" value="Expressed in kidney and 19 other cell types or tissues"/>
</dbReference>
<dbReference type="GO" id="GO:0005794">
    <property type="term" value="C:Golgi apparatus"/>
    <property type="evidence" value="ECO:0000266"/>
    <property type="project" value="RGD"/>
</dbReference>
<dbReference type="GO" id="GO:0031985">
    <property type="term" value="C:Golgi cisterna"/>
    <property type="evidence" value="ECO:0000266"/>
    <property type="project" value="RGD"/>
</dbReference>
<dbReference type="GO" id="GO:0000139">
    <property type="term" value="C:Golgi membrane"/>
    <property type="evidence" value="ECO:0000314"/>
    <property type="project" value="UniProtKB"/>
</dbReference>
<dbReference type="GO" id="GO:0007041">
    <property type="term" value="P:lysosomal transport"/>
    <property type="evidence" value="ECO:0000266"/>
    <property type="project" value="RGD"/>
</dbReference>
<dbReference type="GO" id="GO:0007040">
    <property type="term" value="P:lysosome organization"/>
    <property type="evidence" value="ECO:0000250"/>
    <property type="project" value="UniProtKB"/>
</dbReference>
<dbReference type="GO" id="GO:0060627">
    <property type="term" value="P:regulation of vesicle-mediated transport"/>
    <property type="evidence" value="ECO:0000250"/>
    <property type="project" value="UniProtKB"/>
</dbReference>
<dbReference type="InterPro" id="IPR028024">
    <property type="entry name" value="LYSET"/>
</dbReference>
<dbReference type="PANTHER" id="PTHR31925:SF1">
    <property type="entry name" value="LYSOSOMAL ENZYME TRAFFICKING FACTOR"/>
    <property type="match status" value="1"/>
</dbReference>
<dbReference type="PANTHER" id="PTHR31925">
    <property type="entry name" value="TRANSMEMBRANE PROTEIN 251"/>
    <property type="match status" value="1"/>
</dbReference>
<dbReference type="Pfam" id="PF15190">
    <property type="entry name" value="TMEM251"/>
    <property type="match status" value="1"/>
</dbReference>
<reference key="1">
    <citation type="journal article" date="2004" name="Nature">
        <title>Genome sequence of the Brown Norway rat yields insights into mammalian evolution.</title>
        <authorList>
            <person name="Gibbs R.A."/>
            <person name="Weinstock G.M."/>
            <person name="Metzker M.L."/>
            <person name="Muzny D.M."/>
            <person name="Sodergren E.J."/>
            <person name="Scherer S."/>
            <person name="Scott G."/>
            <person name="Steffen D."/>
            <person name="Worley K.C."/>
            <person name="Burch P.E."/>
            <person name="Okwuonu G."/>
            <person name="Hines S."/>
            <person name="Lewis L."/>
            <person name="Deramo C."/>
            <person name="Delgado O."/>
            <person name="Dugan-Rocha S."/>
            <person name="Miner G."/>
            <person name="Morgan M."/>
            <person name="Hawes A."/>
            <person name="Gill R."/>
            <person name="Holt R.A."/>
            <person name="Adams M.D."/>
            <person name="Amanatides P.G."/>
            <person name="Baden-Tillson H."/>
            <person name="Barnstead M."/>
            <person name="Chin S."/>
            <person name="Evans C.A."/>
            <person name="Ferriera S."/>
            <person name="Fosler C."/>
            <person name="Glodek A."/>
            <person name="Gu Z."/>
            <person name="Jennings D."/>
            <person name="Kraft C.L."/>
            <person name="Nguyen T."/>
            <person name="Pfannkoch C.M."/>
            <person name="Sitter C."/>
            <person name="Sutton G.G."/>
            <person name="Venter J.C."/>
            <person name="Woodage T."/>
            <person name="Smith D."/>
            <person name="Lee H.-M."/>
            <person name="Gustafson E."/>
            <person name="Cahill P."/>
            <person name="Kana A."/>
            <person name="Doucette-Stamm L."/>
            <person name="Weinstock K."/>
            <person name="Fechtel K."/>
            <person name="Weiss R.B."/>
            <person name="Dunn D.M."/>
            <person name="Green E.D."/>
            <person name="Blakesley R.W."/>
            <person name="Bouffard G.G."/>
            <person name="De Jong P.J."/>
            <person name="Osoegawa K."/>
            <person name="Zhu B."/>
            <person name="Marra M."/>
            <person name="Schein J."/>
            <person name="Bosdet I."/>
            <person name="Fjell C."/>
            <person name="Jones S."/>
            <person name="Krzywinski M."/>
            <person name="Mathewson C."/>
            <person name="Siddiqui A."/>
            <person name="Wye N."/>
            <person name="McPherson J."/>
            <person name="Zhao S."/>
            <person name="Fraser C.M."/>
            <person name="Shetty J."/>
            <person name="Shatsman S."/>
            <person name="Geer K."/>
            <person name="Chen Y."/>
            <person name="Abramzon S."/>
            <person name="Nierman W.C."/>
            <person name="Havlak P.H."/>
            <person name="Chen R."/>
            <person name="Durbin K.J."/>
            <person name="Egan A."/>
            <person name="Ren Y."/>
            <person name="Song X.-Z."/>
            <person name="Li B."/>
            <person name="Liu Y."/>
            <person name="Qin X."/>
            <person name="Cawley S."/>
            <person name="Cooney A.J."/>
            <person name="D'Souza L.M."/>
            <person name="Martin K."/>
            <person name="Wu J.Q."/>
            <person name="Gonzalez-Garay M.L."/>
            <person name="Jackson A.R."/>
            <person name="Kalafus K.J."/>
            <person name="McLeod M.P."/>
            <person name="Milosavljevic A."/>
            <person name="Virk D."/>
            <person name="Volkov A."/>
            <person name="Wheeler D.A."/>
            <person name="Zhang Z."/>
            <person name="Bailey J.A."/>
            <person name="Eichler E.E."/>
            <person name="Tuzun E."/>
            <person name="Birney E."/>
            <person name="Mongin E."/>
            <person name="Ureta-Vidal A."/>
            <person name="Woodwark C."/>
            <person name="Zdobnov E."/>
            <person name="Bork P."/>
            <person name="Suyama M."/>
            <person name="Torrents D."/>
            <person name="Alexandersson M."/>
            <person name="Trask B.J."/>
            <person name="Young J.M."/>
            <person name="Huang H."/>
            <person name="Wang H."/>
            <person name="Xing H."/>
            <person name="Daniels S."/>
            <person name="Gietzen D."/>
            <person name="Schmidt J."/>
            <person name="Stevens K."/>
            <person name="Vitt U."/>
            <person name="Wingrove J."/>
            <person name="Camara F."/>
            <person name="Mar Alba M."/>
            <person name="Abril J.F."/>
            <person name="Guigo R."/>
            <person name="Smit A."/>
            <person name="Dubchak I."/>
            <person name="Rubin E.M."/>
            <person name="Couronne O."/>
            <person name="Poliakov A."/>
            <person name="Huebner N."/>
            <person name="Ganten D."/>
            <person name="Goesele C."/>
            <person name="Hummel O."/>
            <person name="Kreitler T."/>
            <person name="Lee Y.-A."/>
            <person name="Monti J."/>
            <person name="Schulz H."/>
            <person name="Zimdahl H."/>
            <person name="Himmelbauer H."/>
            <person name="Lehrach H."/>
            <person name="Jacob H.J."/>
            <person name="Bromberg S."/>
            <person name="Gullings-Handley J."/>
            <person name="Jensen-Seaman M.I."/>
            <person name="Kwitek A.E."/>
            <person name="Lazar J."/>
            <person name="Pasko D."/>
            <person name="Tonellato P.J."/>
            <person name="Twigger S."/>
            <person name="Ponting C.P."/>
            <person name="Duarte J.M."/>
            <person name="Rice S."/>
            <person name="Goodstadt L."/>
            <person name="Beatson S.A."/>
            <person name="Emes R.D."/>
            <person name="Winter E.E."/>
            <person name="Webber C."/>
            <person name="Brandt P."/>
            <person name="Nyakatura G."/>
            <person name="Adetobi M."/>
            <person name="Chiaromonte F."/>
            <person name="Elnitski L."/>
            <person name="Eswara P."/>
            <person name="Hardison R.C."/>
            <person name="Hou M."/>
            <person name="Kolbe D."/>
            <person name="Makova K."/>
            <person name="Miller W."/>
            <person name="Nekrutenko A."/>
            <person name="Riemer C."/>
            <person name="Schwartz S."/>
            <person name="Taylor J."/>
            <person name="Yang S."/>
            <person name="Zhang Y."/>
            <person name="Lindpaintner K."/>
            <person name="Andrews T.D."/>
            <person name="Caccamo M."/>
            <person name="Clamp M."/>
            <person name="Clarke L."/>
            <person name="Curwen V."/>
            <person name="Durbin R.M."/>
            <person name="Eyras E."/>
            <person name="Searle S.M."/>
            <person name="Cooper G.M."/>
            <person name="Batzoglou S."/>
            <person name="Brudno M."/>
            <person name="Sidow A."/>
            <person name="Stone E.A."/>
            <person name="Payseur B.A."/>
            <person name="Bourque G."/>
            <person name="Lopez-Otin C."/>
            <person name="Puente X.S."/>
            <person name="Chakrabarti K."/>
            <person name="Chatterji S."/>
            <person name="Dewey C."/>
            <person name="Pachter L."/>
            <person name="Bray N."/>
            <person name="Yap V.B."/>
            <person name="Caspi A."/>
            <person name="Tesler G."/>
            <person name="Pevzner P.A."/>
            <person name="Haussler D."/>
            <person name="Roskin K.M."/>
            <person name="Baertsch R."/>
            <person name="Clawson H."/>
            <person name="Furey T.S."/>
            <person name="Hinrichs A.S."/>
            <person name="Karolchik D."/>
            <person name="Kent W.J."/>
            <person name="Rosenbloom K.R."/>
            <person name="Trumbower H."/>
            <person name="Weirauch M."/>
            <person name="Cooper D.N."/>
            <person name="Stenson P.D."/>
            <person name="Ma B."/>
            <person name="Brent M."/>
            <person name="Arumugam M."/>
            <person name="Shteynberg D."/>
            <person name="Copley R.R."/>
            <person name="Taylor M.S."/>
            <person name="Riethman H."/>
            <person name="Mudunuri U."/>
            <person name="Peterson J."/>
            <person name="Guyer M."/>
            <person name="Felsenfeld A."/>
            <person name="Old S."/>
            <person name="Mockrin S."/>
            <person name="Collins F.S."/>
        </authorList>
    </citation>
    <scope>NUCLEOTIDE SEQUENCE [LARGE SCALE GENOMIC DNA]</scope>
    <source>
        <strain>Brown Norway</strain>
    </source>
</reference>
<reference key="2">
    <citation type="submission" date="2005-07" db="EMBL/GenBank/DDBJ databases">
        <authorList>
            <person name="Mural R.J."/>
            <person name="Adams M.D."/>
            <person name="Myers E.W."/>
            <person name="Smith H.O."/>
            <person name="Venter J.C."/>
        </authorList>
    </citation>
    <scope>NUCLEOTIDE SEQUENCE [LARGE SCALE GENOMIC DNA]</scope>
</reference>
<reference key="3">
    <citation type="journal article" date="2022" name="Nat. Commun.">
        <title>GCAF(TMEM251) regulates lysosome biogenesis by activating the mannose-6-phosphate pathway.</title>
        <authorList>
            <person name="Zhang W."/>
            <person name="Yang X."/>
            <person name="Li Y."/>
            <person name="Yu L."/>
            <person name="Zhang B."/>
            <person name="Zhang J."/>
            <person name="Cho W.J."/>
            <person name="Venkatarangan V."/>
            <person name="Chen L."/>
            <person name="Burugula B.B."/>
            <person name="Bui S."/>
            <person name="Wang Y."/>
            <person name="Duan C."/>
            <person name="Kitzman J.O."/>
            <person name="Li M."/>
        </authorList>
    </citation>
    <scope>SUBCELLULAR LOCATION</scope>
</reference>
<gene>
    <name type="primary">Lyset</name>
    <name evidence="6" type="synonym">Tmem251</name>
</gene>